<proteinExistence type="inferred from homology"/>
<reference key="1">
    <citation type="journal article" date="2004" name="Proc. Natl. Acad. Sci. U.S.A.">
        <title>Genomic plasticity of the causative agent of melioidosis, Burkholderia pseudomallei.</title>
        <authorList>
            <person name="Holden M.T.G."/>
            <person name="Titball R.W."/>
            <person name="Peacock S.J."/>
            <person name="Cerdeno-Tarraga A.-M."/>
            <person name="Atkins T."/>
            <person name="Crossman L.C."/>
            <person name="Pitt T."/>
            <person name="Churcher C."/>
            <person name="Mungall K.L."/>
            <person name="Bentley S.D."/>
            <person name="Sebaihia M."/>
            <person name="Thomson N.R."/>
            <person name="Bason N."/>
            <person name="Beacham I.R."/>
            <person name="Brooks K."/>
            <person name="Brown K.A."/>
            <person name="Brown N.F."/>
            <person name="Challis G.L."/>
            <person name="Cherevach I."/>
            <person name="Chillingworth T."/>
            <person name="Cronin A."/>
            <person name="Crossett B."/>
            <person name="Davis P."/>
            <person name="DeShazer D."/>
            <person name="Feltwell T."/>
            <person name="Fraser A."/>
            <person name="Hance Z."/>
            <person name="Hauser H."/>
            <person name="Holroyd S."/>
            <person name="Jagels K."/>
            <person name="Keith K.E."/>
            <person name="Maddison M."/>
            <person name="Moule S."/>
            <person name="Price C."/>
            <person name="Quail M.A."/>
            <person name="Rabbinowitsch E."/>
            <person name="Rutherford K."/>
            <person name="Sanders M."/>
            <person name="Simmonds M."/>
            <person name="Songsivilai S."/>
            <person name="Stevens K."/>
            <person name="Tumapa S."/>
            <person name="Vesaratchavest M."/>
            <person name="Whitehead S."/>
            <person name="Yeats C."/>
            <person name="Barrell B.G."/>
            <person name="Oyston P.C.F."/>
            <person name="Parkhill J."/>
        </authorList>
    </citation>
    <scope>NUCLEOTIDE SEQUENCE [LARGE SCALE GENOMIC DNA]</scope>
    <source>
        <strain>K96243</strain>
    </source>
</reference>
<organism>
    <name type="scientific">Burkholderia pseudomallei (strain K96243)</name>
    <dbReference type="NCBI Taxonomy" id="272560"/>
    <lineage>
        <taxon>Bacteria</taxon>
        <taxon>Pseudomonadati</taxon>
        <taxon>Pseudomonadota</taxon>
        <taxon>Betaproteobacteria</taxon>
        <taxon>Burkholderiales</taxon>
        <taxon>Burkholderiaceae</taxon>
        <taxon>Burkholderia</taxon>
        <taxon>pseudomallei group</taxon>
    </lineage>
</organism>
<gene>
    <name evidence="1" type="primary">rsmH</name>
    <name type="synonym">mraW</name>
    <name type="ordered locus">BPSL3033</name>
</gene>
<accession>Q63QI9</accession>
<evidence type="ECO:0000255" key="1">
    <source>
        <dbReference type="HAMAP-Rule" id="MF_01007"/>
    </source>
</evidence>
<feature type="chain" id="PRO_0000108597" description="Ribosomal RNA small subunit methyltransferase H">
    <location>
        <begin position="1"/>
        <end position="313"/>
    </location>
</feature>
<feature type="binding site" evidence="1">
    <location>
        <begin position="35"/>
        <end position="37"/>
    </location>
    <ligand>
        <name>S-adenosyl-L-methionine</name>
        <dbReference type="ChEBI" id="CHEBI:59789"/>
    </ligand>
</feature>
<feature type="binding site" evidence="1">
    <location>
        <position position="55"/>
    </location>
    <ligand>
        <name>S-adenosyl-L-methionine</name>
        <dbReference type="ChEBI" id="CHEBI:59789"/>
    </ligand>
</feature>
<feature type="binding site" evidence="1">
    <location>
        <position position="79"/>
    </location>
    <ligand>
        <name>S-adenosyl-L-methionine</name>
        <dbReference type="ChEBI" id="CHEBI:59789"/>
    </ligand>
</feature>
<feature type="binding site" evidence="1">
    <location>
        <position position="100"/>
    </location>
    <ligand>
        <name>S-adenosyl-L-methionine</name>
        <dbReference type="ChEBI" id="CHEBI:59789"/>
    </ligand>
</feature>
<feature type="binding site" evidence="1">
    <location>
        <position position="107"/>
    </location>
    <ligand>
        <name>S-adenosyl-L-methionine</name>
        <dbReference type="ChEBI" id="CHEBI:59789"/>
    </ligand>
</feature>
<protein>
    <recommendedName>
        <fullName evidence="1">Ribosomal RNA small subunit methyltransferase H</fullName>
        <ecNumber evidence="1">2.1.1.199</ecNumber>
    </recommendedName>
    <alternativeName>
        <fullName evidence="1">16S rRNA m(4)C1402 methyltransferase</fullName>
    </alternativeName>
    <alternativeName>
        <fullName evidence="1">rRNA (cytosine-N(4)-)-methyltransferase RsmH</fullName>
    </alternativeName>
</protein>
<dbReference type="EC" id="2.1.1.199" evidence="1"/>
<dbReference type="EMBL" id="BX571965">
    <property type="protein sequence ID" value="CAH37045.1"/>
    <property type="molecule type" value="Genomic_DNA"/>
</dbReference>
<dbReference type="RefSeq" id="WP_009938761.1">
    <property type="nucleotide sequence ID" value="NZ_CP009538.1"/>
</dbReference>
<dbReference type="RefSeq" id="YP_109629.1">
    <property type="nucleotide sequence ID" value="NC_006350.1"/>
</dbReference>
<dbReference type="SMR" id="Q63QI9"/>
<dbReference type="STRING" id="272560.BPSL3033"/>
<dbReference type="KEGG" id="bps:BPSL3033"/>
<dbReference type="PATRIC" id="fig|272560.51.peg.2233"/>
<dbReference type="eggNOG" id="COG0275">
    <property type="taxonomic scope" value="Bacteria"/>
</dbReference>
<dbReference type="Proteomes" id="UP000000605">
    <property type="component" value="Chromosome 1"/>
</dbReference>
<dbReference type="GO" id="GO:0005737">
    <property type="term" value="C:cytoplasm"/>
    <property type="evidence" value="ECO:0007669"/>
    <property type="project" value="UniProtKB-SubCell"/>
</dbReference>
<dbReference type="GO" id="GO:0071424">
    <property type="term" value="F:rRNA (cytosine-N4-)-methyltransferase activity"/>
    <property type="evidence" value="ECO:0007669"/>
    <property type="project" value="UniProtKB-UniRule"/>
</dbReference>
<dbReference type="GO" id="GO:0070475">
    <property type="term" value="P:rRNA base methylation"/>
    <property type="evidence" value="ECO:0007669"/>
    <property type="project" value="UniProtKB-UniRule"/>
</dbReference>
<dbReference type="Gene3D" id="1.10.150.170">
    <property type="entry name" value="Putative methyltransferase TM0872, insert domain"/>
    <property type="match status" value="1"/>
</dbReference>
<dbReference type="Gene3D" id="3.40.50.150">
    <property type="entry name" value="Vaccinia Virus protein VP39"/>
    <property type="match status" value="1"/>
</dbReference>
<dbReference type="HAMAP" id="MF_01007">
    <property type="entry name" value="16SrRNA_methyltr_H"/>
    <property type="match status" value="1"/>
</dbReference>
<dbReference type="InterPro" id="IPR002903">
    <property type="entry name" value="RsmH"/>
</dbReference>
<dbReference type="InterPro" id="IPR023397">
    <property type="entry name" value="SAM-dep_MeTrfase_MraW_recog"/>
</dbReference>
<dbReference type="InterPro" id="IPR029063">
    <property type="entry name" value="SAM-dependent_MTases_sf"/>
</dbReference>
<dbReference type="NCBIfam" id="TIGR00006">
    <property type="entry name" value="16S rRNA (cytosine(1402)-N(4))-methyltransferase RsmH"/>
    <property type="match status" value="1"/>
</dbReference>
<dbReference type="PANTHER" id="PTHR11265:SF0">
    <property type="entry name" value="12S RRNA N4-METHYLCYTIDINE METHYLTRANSFERASE"/>
    <property type="match status" value="1"/>
</dbReference>
<dbReference type="PANTHER" id="PTHR11265">
    <property type="entry name" value="S-ADENOSYL-METHYLTRANSFERASE MRAW"/>
    <property type="match status" value="1"/>
</dbReference>
<dbReference type="Pfam" id="PF01795">
    <property type="entry name" value="Methyltransf_5"/>
    <property type="match status" value="1"/>
</dbReference>
<dbReference type="PIRSF" id="PIRSF004486">
    <property type="entry name" value="MraW"/>
    <property type="match status" value="1"/>
</dbReference>
<dbReference type="SUPFAM" id="SSF81799">
    <property type="entry name" value="Putative methyltransferase TM0872, insert domain"/>
    <property type="match status" value="1"/>
</dbReference>
<dbReference type="SUPFAM" id="SSF53335">
    <property type="entry name" value="S-adenosyl-L-methionine-dependent methyltransferases"/>
    <property type="match status" value="1"/>
</dbReference>
<sequence>MGNEFQHRTVLLDEAVDALVTRPDGVYVDGTFGRGGHSRAVLARLGYAGRLIAFDKDPRAIETAESIEDARFEIVHDSFAAMKGALDARGIGRVSGVLLDLGVSSPQVDDPARGFSFRANGPLDMRMDPTRGESAAEWLARASVQELTEVIRDYGEERFAFQIAKAIVARRAESDRLGPLDSTGELAQIVGHVVKTREKGKDPATRTFQAIRIHVNQELADLQVVLEAALSLLEQGGRLVVISFHSLEDRIVKRFLQAHASAPAVDRRLPIRAADLPRPPLKLLGRMFPNDAEVAANPRARSAVMRIAERVAP</sequence>
<name>RSMH_BURPS</name>
<comment type="function">
    <text evidence="1">Specifically methylates the N4 position of cytidine in position 1402 (C1402) of 16S rRNA.</text>
</comment>
<comment type="catalytic activity">
    <reaction evidence="1">
        <text>cytidine(1402) in 16S rRNA + S-adenosyl-L-methionine = N(4)-methylcytidine(1402) in 16S rRNA + S-adenosyl-L-homocysteine + H(+)</text>
        <dbReference type="Rhea" id="RHEA:42928"/>
        <dbReference type="Rhea" id="RHEA-COMP:10286"/>
        <dbReference type="Rhea" id="RHEA-COMP:10287"/>
        <dbReference type="ChEBI" id="CHEBI:15378"/>
        <dbReference type="ChEBI" id="CHEBI:57856"/>
        <dbReference type="ChEBI" id="CHEBI:59789"/>
        <dbReference type="ChEBI" id="CHEBI:74506"/>
        <dbReference type="ChEBI" id="CHEBI:82748"/>
        <dbReference type="EC" id="2.1.1.199"/>
    </reaction>
</comment>
<comment type="subcellular location">
    <subcellularLocation>
        <location evidence="1">Cytoplasm</location>
    </subcellularLocation>
</comment>
<comment type="similarity">
    <text evidence="1">Belongs to the methyltransferase superfamily. RsmH family.</text>
</comment>
<keyword id="KW-0963">Cytoplasm</keyword>
<keyword id="KW-0489">Methyltransferase</keyword>
<keyword id="KW-1185">Reference proteome</keyword>
<keyword id="KW-0698">rRNA processing</keyword>
<keyword id="KW-0949">S-adenosyl-L-methionine</keyword>
<keyword id="KW-0808">Transferase</keyword>